<evidence type="ECO:0000255" key="1">
    <source>
        <dbReference type="HAMAP-Rule" id="MF_00181"/>
    </source>
</evidence>
<accession>B3R0N4</accession>
<feature type="chain" id="PRO_1000192720" description="Probable cytosol aminopeptidase">
    <location>
        <begin position="1"/>
        <end position="498"/>
    </location>
</feature>
<feature type="active site" evidence="1">
    <location>
        <position position="274"/>
    </location>
</feature>
<feature type="active site" evidence="1">
    <location>
        <position position="348"/>
    </location>
</feature>
<feature type="binding site" evidence="1">
    <location>
        <position position="262"/>
    </location>
    <ligand>
        <name>Mn(2+)</name>
        <dbReference type="ChEBI" id="CHEBI:29035"/>
        <label>2</label>
    </ligand>
</feature>
<feature type="binding site" evidence="1">
    <location>
        <position position="267"/>
    </location>
    <ligand>
        <name>Mn(2+)</name>
        <dbReference type="ChEBI" id="CHEBI:29035"/>
        <label>1</label>
    </ligand>
</feature>
<feature type="binding site" evidence="1">
    <location>
        <position position="267"/>
    </location>
    <ligand>
        <name>Mn(2+)</name>
        <dbReference type="ChEBI" id="CHEBI:29035"/>
        <label>2</label>
    </ligand>
</feature>
<feature type="binding site" evidence="1">
    <location>
        <position position="285"/>
    </location>
    <ligand>
        <name>Mn(2+)</name>
        <dbReference type="ChEBI" id="CHEBI:29035"/>
        <label>2</label>
    </ligand>
</feature>
<feature type="binding site" evidence="1">
    <location>
        <position position="344"/>
    </location>
    <ligand>
        <name>Mn(2+)</name>
        <dbReference type="ChEBI" id="CHEBI:29035"/>
        <label>1</label>
    </ligand>
</feature>
<feature type="binding site" evidence="1">
    <location>
        <position position="346"/>
    </location>
    <ligand>
        <name>Mn(2+)</name>
        <dbReference type="ChEBI" id="CHEBI:29035"/>
        <label>1</label>
    </ligand>
</feature>
<feature type="binding site" evidence="1">
    <location>
        <position position="346"/>
    </location>
    <ligand>
        <name>Mn(2+)</name>
        <dbReference type="ChEBI" id="CHEBI:29035"/>
        <label>2</label>
    </ligand>
</feature>
<protein>
    <recommendedName>
        <fullName evidence="1">Probable cytosol aminopeptidase</fullName>
        <ecNumber evidence="1">3.4.11.1</ecNumber>
    </recommendedName>
    <alternativeName>
        <fullName evidence="1">Leucine aminopeptidase</fullName>
        <shortName evidence="1">LAP</shortName>
        <ecNumber evidence="1">3.4.11.10</ecNumber>
    </alternativeName>
    <alternativeName>
        <fullName evidence="1">Leucyl aminopeptidase</fullName>
    </alternativeName>
</protein>
<sequence>MNVSFITQYTSSIDADAAILLQVEKFEKTFGLELVDPNRIIKKGYLIENFQGSFGSQIKFLYLEGSPFAFVKVVGLGKEQSINDETWLKAGGLCVSEIKNYPKKVVVFADALGIDVSTTQIMNFVLGALLKQYSFECYYTDKKKSKQKNKNILELVIITKNAENCQKELKQVQAICEGVNLTKELVNEPANILGTEEFVEKIKKLEKLNVKVQVLDKEKLKELGMNALLSVAQGSSRPPYLVIMQWNGSDNKEEEPLAFVGKGVVFDSGGISIKHSSGMEDMKADMGGAGTVVGLMHTLATRKAKINVTGVVGLVENMPSCHAQRPGDIVTSMSGQTIEVINTDAEGRMVLADVLWYCKTKIQPKLIVDLATLTGAIRIALGEQHAGLFSNNEALAKQIIKSGEATSEKVWQLPLGLEYDKLIDSKFADMKNSSGGSAGSITAAQFLKRFVDEKTPWAHIDIAAVCMGNKLNEFNNSWASGFGVRLLNYLIKNYYEQK</sequence>
<reference key="1">
    <citation type="journal article" date="2008" name="BMC Genomics">
        <title>The linear chromosome of the plant-pathogenic mycoplasma 'Candidatus Phytoplasma mali'.</title>
        <authorList>
            <person name="Kube M."/>
            <person name="Schneider B."/>
            <person name="Kuhl H."/>
            <person name="Dandekar T."/>
            <person name="Heitmann K."/>
            <person name="Migdoll A.M."/>
            <person name="Reinhardt R."/>
            <person name="Seemueller E."/>
        </authorList>
    </citation>
    <scope>NUCLEOTIDE SEQUENCE [LARGE SCALE GENOMIC DNA]</scope>
    <source>
        <strain>AT</strain>
    </source>
</reference>
<name>AMPA_PHYMT</name>
<comment type="function">
    <text evidence="1">Presumably involved in the processing and regular turnover of intracellular proteins. Catalyzes the removal of unsubstituted N-terminal amino acids from various peptides.</text>
</comment>
<comment type="catalytic activity">
    <reaction evidence="1">
        <text>Release of an N-terminal amino acid, Xaa-|-Yaa-, in which Xaa is preferably Leu, but may be other amino acids including Pro although not Arg or Lys, and Yaa may be Pro. Amino acid amides and methyl esters are also readily hydrolyzed, but rates on arylamides are exceedingly low.</text>
        <dbReference type="EC" id="3.4.11.1"/>
    </reaction>
</comment>
<comment type="catalytic activity">
    <reaction evidence="1">
        <text>Release of an N-terminal amino acid, preferentially leucine, but not glutamic or aspartic acids.</text>
        <dbReference type="EC" id="3.4.11.10"/>
    </reaction>
</comment>
<comment type="cofactor">
    <cofactor evidence="1">
        <name>Mn(2+)</name>
        <dbReference type="ChEBI" id="CHEBI:29035"/>
    </cofactor>
    <text evidence="1">Binds 2 manganese ions per subunit.</text>
</comment>
<comment type="subcellular location">
    <subcellularLocation>
        <location evidence="1">Cytoplasm</location>
    </subcellularLocation>
</comment>
<comment type="similarity">
    <text evidence="1">Belongs to the peptidase M17 family.</text>
</comment>
<gene>
    <name evidence="1" type="primary">pepA</name>
    <name type="ordered locus">ATP_00431</name>
</gene>
<proteinExistence type="inferred from homology"/>
<organism>
    <name type="scientific">Phytoplasma mali (strain AT)</name>
    <dbReference type="NCBI Taxonomy" id="482235"/>
    <lineage>
        <taxon>Bacteria</taxon>
        <taxon>Bacillati</taxon>
        <taxon>Mycoplasmatota</taxon>
        <taxon>Mollicutes</taxon>
        <taxon>Acholeplasmatales</taxon>
        <taxon>Acholeplasmataceae</taxon>
        <taxon>Candidatus Phytoplasma</taxon>
        <taxon>16SrX (Apple proliferation group)</taxon>
    </lineage>
</organism>
<keyword id="KW-0031">Aminopeptidase</keyword>
<keyword id="KW-0963">Cytoplasm</keyword>
<keyword id="KW-0378">Hydrolase</keyword>
<keyword id="KW-0464">Manganese</keyword>
<keyword id="KW-0479">Metal-binding</keyword>
<keyword id="KW-0645">Protease</keyword>
<keyword id="KW-1185">Reference proteome</keyword>
<dbReference type="EC" id="3.4.11.1" evidence="1"/>
<dbReference type="EC" id="3.4.11.10" evidence="1"/>
<dbReference type="EMBL" id="CU469464">
    <property type="protein sequence ID" value="CAP18618.1"/>
    <property type="molecule type" value="Genomic_DNA"/>
</dbReference>
<dbReference type="SMR" id="B3R0N4"/>
<dbReference type="STRING" id="37692.ATP_00431"/>
<dbReference type="KEGG" id="pml:ATP_00431"/>
<dbReference type="eggNOG" id="COG0260">
    <property type="taxonomic scope" value="Bacteria"/>
</dbReference>
<dbReference type="HOGENOM" id="CLU_013734_6_0_14"/>
<dbReference type="Proteomes" id="UP000002020">
    <property type="component" value="Chromosome"/>
</dbReference>
<dbReference type="GO" id="GO:0005737">
    <property type="term" value="C:cytoplasm"/>
    <property type="evidence" value="ECO:0007669"/>
    <property type="project" value="UniProtKB-SubCell"/>
</dbReference>
<dbReference type="GO" id="GO:0030145">
    <property type="term" value="F:manganese ion binding"/>
    <property type="evidence" value="ECO:0007669"/>
    <property type="project" value="UniProtKB-UniRule"/>
</dbReference>
<dbReference type="GO" id="GO:0070006">
    <property type="term" value="F:metalloaminopeptidase activity"/>
    <property type="evidence" value="ECO:0007669"/>
    <property type="project" value="InterPro"/>
</dbReference>
<dbReference type="GO" id="GO:0006508">
    <property type="term" value="P:proteolysis"/>
    <property type="evidence" value="ECO:0007669"/>
    <property type="project" value="UniProtKB-KW"/>
</dbReference>
<dbReference type="CDD" id="cd00433">
    <property type="entry name" value="Peptidase_M17"/>
    <property type="match status" value="1"/>
</dbReference>
<dbReference type="Gene3D" id="3.40.220.10">
    <property type="entry name" value="Leucine Aminopeptidase, subunit E, domain 1"/>
    <property type="match status" value="1"/>
</dbReference>
<dbReference type="Gene3D" id="3.40.630.10">
    <property type="entry name" value="Zn peptidases"/>
    <property type="match status" value="1"/>
</dbReference>
<dbReference type="HAMAP" id="MF_00181">
    <property type="entry name" value="Cytosol_peptidase_M17"/>
    <property type="match status" value="1"/>
</dbReference>
<dbReference type="InterPro" id="IPR011356">
    <property type="entry name" value="Leucine_aapep/pepB"/>
</dbReference>
<dbReference type="InterPro" id="IPR043472">
    <property type="entry name" value="Macro_dom-like"/>
</dbReference>
<dbReference type="InterPro" id="IPR000819">
    <property type="entry name" value="Peptidase_M17_C"/>
</dbReference>
<dbReference type="InterPro" id="IPR023042">
    <property type="entry name" value="Peptidase_M17_leu_NH2_pept"/>
</dbReference>
<dbReference type="InterPro" id="IPR008283">
    <property type="entry name" value="Peptidase_M17_N"/>
</dbReference>
<dbReference type="NCBIfam" id="NF002074">
    <property type="entry name" value="PRK00913.1-4"/>
    <property type="match status" value="1"/>
</dbReference>
<dbReference type="NCBIfam" id="NF002075">
    <property type="entry name" value="PRK00913.2-2"/>
    <property type="match status" value="1"/>
</dbReference>
<dbReference type="NCBIfam" id="NF002077">
    <property type="entry name" value="PRK00913.2-4"/>
    <property type="match status" value="1"/>
</dbReference>
<dbReference type="PANTHER" id="PTHR11963:SF23">
    <property type="entry name" value="CYTOSOL AMINOPEPTIDASE"/>
    <property type="match status" value="1"/>
</dbReference>
<dbReference type="PANTHER" id="PTHR11963">
    <property type="entry name" value="LEUCINE AMINOPEPTIDASE-RELATED"/>
    <property type="match status" value="1"/>
</dbReference>
<dbReference type="Pfam" id="PF00883">
    <property type="entry name" value="Peptidase_M17"/>
    <property type="match status" value="1"/>
</dbReference>
<dbReference type="Pfam" id="PF02789">
    <property type="entry name" value="Peptidase_M17_N"/>
    <property type="match status" value="1"/>
</dbReference>
<dbReference type="PRINTS" id="PR00481">
    <property type="entry name" value="LAMNOPPTDASE"/>
</dbReference>
<dbReference type="SUPFAM" id="SSF52949">
    <property type="entry name" value="Macro domain-like"/>
    <property type="match status" value="1"/>
</dbReference>
<dbReference type="SUPFAM" id="SSF53187">
    <property type="entry name" value="Zn-dependent exopeptidases"/>
    <property type="match status" value="1"/>
</dbReference>
<dbReference type="PROSITE" id="PS00631">
    <property type="entry name" value="CYTOSOL_AP"/>
    <property type="match status" value="1"/>
</dbReference>